<organism>
    <name type="scientific">Nicotiana tabacum</name>
    <name type="common">Common tobacco</name>
    <dbReference type="NCBI Taxonomy" id="4097"/>
    <lineage>
        <taxon>Eukaryota</taxon>
        <taxon>Viridiplantae</taxon>
        <taxon>Streptophyta</taxon>
        <taxon>Embryophyta</taxon>
        <taxon>Tracheophyta</taxon>
        <taxon>Spermatophyta</taxon>
        <taxon>Magnoliopsida</taxon>
        <taxon>eudicotyledons</taxon>
        <taxon>Gunneridae</taxon>
        <taxon>Pentapetalae</taxon>
        <taxon>asterids</taxon>
        <taxon>lamiids</taxon>
        <taxon>Solanales</taxon>
        <taxon>Solanaceae</taxon>
        <taxon>Nicotianoideae</taxon>
        <taxon>Nicotianeae</taxon>
        <taxon>Nicotiana</taxon>
    </lineage>
</organism>
<name>DEF_TOBAC</name>
<dbReference type="EMBL" id="Z11748">
    <property type="protein sequence ID" value="CAA77806.1"/>
    <property type="molecule type" value="mRNA"/>
</dbReference>
<dbReference type="PIR" id="S23574">
    <property type="entry name" value="S23574"/>
</dbReference>
<dbReference type="RefSeq" id="XP_016515032.1">
    <property type="nucleotide sequence ID" value="XM_016659546.1"/>
</dbReference>
<dbReference type="PDB" id="1MR4">
    <property type="method" value="NMR"/>
    <property type="chains" value="A=26-72"/>
</dbReference>
<dbReference type="PDBsum" id="1MR4"/>
<dbReference type="SMR" id="P32026"/>
<dbReference type="STRING" id="4097.P32026"/>
<dbReference type="TCDB" id="1.C.45.1.2">
    <property type="family name" value="the plant defensin (plant defensin) family"/>
</dbReference>
<dbReference type="PaxDb" id="4097-P32026"/>
<dbReference type="KEGG" id="nta:107831752"/>
<dbReference type="OMA" id="CISEKFT"/>
<dbReference type="OrthoDB" id="1248372at2759"/>
<dbReference type="EvolutionaryTrace" id="P32026"/>
<dbReference type="Proteomes" id="UP000084051">
    <property type="component" value="Unplaced"/>
</dbReference>
<dbReference type="GO" id="GO:0005576">
    <property type="term" value="C:extracellular region"/>
    <property type="evidence" value="ECO:0007669"/>
    <property type="project" value="UniProtKB-KW"/>
</dbReference>
<dbReference type="GO" id="GO:0005773">
    <property type="term" value="C:vacuole"/>
    <property type="evidence" value="ECO:0007669"/>
    <property type="project" value="UniProtKB-SubCell"/>
</dbReference>
<dbReference type="GO" id="GO:0006952">
    <property type="term" value="P:defense response"/>
    <property type="evidence" value="ECO:0000318"/>
    <property type="project" value="GO_Central"/>
</dbReference>
<dbReference type="GO" id="GO:0050832">
    <property type="term" value="P:defense response to fungus"/>
    <property type="evidence" value="ECO:0007669"/>
    <property type="project" value="UniProtKB-KW"/>
</dbReference>
<dbReference type="GO" id="GO:0031640">
    <property type="term" value="P:killing of cells of another organism"/>
    <property type="evidence" value="ECO:0007669"/>
    <property type="project" value="UniProtKB-KW"/>
</dbReference>
<dbReference type="CDD" id="cd00107">
    <property type="entry name" value="Knot1"/>
    <property type="match status" value="1"/>
</dbReference>
<dbReference type="Gene3D" id="3.30.30.10">
    <property type="entry name" value="Knottin, scorpion toxin-like"/>
    <property type="match status" value="1"/>
</dbReference>
<dbReference type="InterPro" id="IPR008176">
    <property type="entry name" value="Defensin_plant"/>
</dbReference>
<dbReference type="InterPro" id="IPR003614">
    <property type="entry name" value="Scorpion_toxin-like"/>
</dbReference>
<dbReference type="InterPro" id="IPR036574">
    <property type="entry name" value="Scorpion_toxin-like_sf"/>
</dbReference>
<dbReference type="PANTHER" id="PTHR33147:SF128">
    <property type="entry name" value="DEFENSIN-LIKE PROTEIN"/>
    <property type="match status" value="1"/>
</dbReference>
<dbReference type="PANTHER" id="PTHR33147">
    <property type="entry name" value="DEFENSIN-LIKE PROTEIN 1"/>
    <property type="match status" value="1"/>
</dbReference>
<dbReference type="Pfam" id="PF00304">
    <property type="entry name" value="Gamma-thionin"/>
    <property type="match status" value="1"/>
</dbReference>
<dbReference type="PRINTS" id="PR00288">
    <property type="entry name" value="PUROTHIONIN"/>
</dbReference>
<dbReference type="SMART" id="SM00505">
    <property type="entry name" value="Knot1"/>
    <property type="match status" value="1"/>
</dbReference>
<dbReference type="SUPFAM" id="SSF57095">
    <property type="entry name" value="Scorpion toxin-like"/>
    <property type="match status" value="1"/>
</dbReference>
<dbReference type="PROSITE" id="PS00940">
    <property type="entry name" value="GAMMA_THIONIN"/>
    <property type="match status" value="1"/>
</dbReference>
<sequence>MARSLCFMAFAILAMMLFVAYEVQARECKTESNTFPGICITKPPCRKACISEKFTDGHCSKLLRRCLCTKPCVFDEKMIKTGAETLVEEAKTLAAALLEEEIMDN</sequence>
<reference key="1">
    <citation type="journal article" date="1992" name="Mol. Gen. Genet.">
        <title>A flower-specific cDNA encoding a novel thionin in tobacco.</title>
        <authorList>
            <person name="Gu Q."/>
            <person name="Kawata E.E."/>
            <person name="Morse M.-J."/>
            <person name="Wu H.-M."/>
            <person name="Cheung A.Y."/>
        </authorList>
    </citation>
    <scope>NUCLEOTIDE SEQUENCE [MRNA]</scope>
    <source>
        <strain>cv. Wisconsin 38</strain>
        <tissue>Flower bud</tissue>
    </source>
</reference>
<reference key="2">
    <citation type="journal article" date="2003" name="J. Mol. Biol.">
        <title>The three-dimensional solution structure of NaD1, a new floral defensin from Nicotiana alata and its application to a homology model of the crop defense protein alfAFP.</title>
        <authorList>
            <person name="Lay F.T."/>
            <person name="Schirra H.J."/>
            <person name="Scanlon M.J."/>
            <person name="Anderson M.A."/>
            <person name="Craik D.J."/>
        </authorList>
    </citation>
    <scope>STRUCTURE BY NMR OF 26-72</scope>
    <scope>DISULFIDE BONDS</scope>
</reference>
<gene>
    <name type="primary">FST</name>
</gene>
<evidence type="ECO:0000250" key="1"/>
<evidence type="ECO:0000255" key="2"/>
<evidence type="ECO:0000269" key="3">
    <source>
    </source>
</evidence>
<evidence type="ECO:0000305" key="4"/>
<evidence type="ECO:0000305" key="5">
    <source>
    </source>
</evidence>
<evidence type="ECO:0007829" key="6">
    <source>
        <dbReference type="PDB" id="1MR4"/>
    </source>
</evidence>
<feature type="signal peptide" evidence="2">
    <location>
        <begin position="1"/>
        <end position="25"/>
    </location>
</feature>
<feature type="chain" id="PRO_0000007057" description="Defensin-like protein">
    <location>
        <begin position="26"/>
        <end position="105"/>
    </location>
</feature>
<feature type="disulfide bond" evidence="3">
    <location>
        <begin position="28"/>
        <end position="72"/>
    </location>
</feature>
<feature type="disulfide bond" evidence="3">
    <location>
        <begin position="39"/>
        <end position="59"/>
    </location>
</feature>
<feature type="disulfide bond" evidence="3">
    <location>
        <begin position="45"/>
        <end position="66"/>
    </location>
</feature>
<feature type="disulfide bond" evidence="3">
    <location>
        <begin position="49"/>
        <end position="68"/>
    </location>
</feature>
<feature type="strand" evidence="6">
    <location>
        <begin position="28"/>
        <end position="31"/>
    </location>
</feature>
<feature type="helix" evidence="6">
    <location>
        <begin position="42"/>
        <end position="51"/>
    </location>
</feature>
<feature type="strand" evidence="6">
    <location>
        <begin position="55"/>
        <end position="59"/>
    </location>
</feature>
<feature type="strand" evidence="6">
    <location>
        <begin position="63"/>
        <end position="70"/>
    </location>
</feature>
<proteinExistence type="evidence at protein level"/>
<accession>P32026</accession>
<comment type="function">
    <text>Involved in floral organogenesis. May play a protective role in flowers by protecting the reproductive organs from potential pathogen attack.</text>
</comment>
<comment type="subcellular location">
    <subcellularLocation>
        <location evidence="1">Secreted</location>
        <location evidence="1">Cell wall</location>
    </subcellularLocation>
    <subcellularLocation>
        <location evidence="1">Vacuole</location>
    </subcellularLocation>
    <text>Possibly the cell wall or vacuole.</text>
</comment>
<comment type="tissue specificity">
    <text>Flower. Found in petals, stamen and pistils, but not in sepals. In particular, accumulation in a configuration surrounding the inner reproductive whorls.</text>
</comment>
<comment type="developmental stage">
    <text>Accumulates in developing flowers and its level drops as flowers mature.</text>
</comment>
<comment type="similarity">
    <text evidence="4">Belongs to the DEFL family.</text>
</comment>
<comment type="caution">
    <text evidence="5">Was initially thought to be a thionin.</text>
</comment>
<protein>
    <recommendedName>
        <fullName>Defensin-like protein</fullName>
    </recommendedName>
    <alternativeName>
        <fullName>Flower-specific gamma-thionin</fullName>
    </alternativeName>
</protein>
<keyword id="KW-0002">3D-structure</keyword>
<keyword id="KW-0929">Antimicrobial</keyword>
<keyword id="KW-0134">Cell wall</keyword>
<keyword id="KW-1015">Disulfide bond</keyword>
<keyword id="KW-0295">Fungicide</keyword>
<keyword id="KW-0611">Plant defense</keyword>
<keyword id="KW-1185">Reference proteome</keyword>
<keyword id="KW-0964">Secreted</keyword>
<keyword id="KW-0732">Signal</keyword>
<keyword id="KW-0926">Vacuole</keyword>